<proteinExistence type="evidence at transcript level"/>
<accession>P46691</accession>
<evidence type="ECO:0000250" key="1">
    <source>
        <dbReference type="UniProtKB" id="P29033"/>
    </source>
</evidence>
<evidence type="ECO:0000250" key="2">
    <source>
        <dbReference type="UniProtKB" id="Q00977"/>
    </source>
</evidence>
<evidence type="ECO:0000305" key="3"/>
<organism>
    <name type="scientific">Ovis aries</name>
    <name type="common">Sheep</name>
    <dbReference type="NCBI Taxonomy" id="9940"/>
    <lineage>
        <taxon>Eukaryota</taxon>
        <taxon>Metazoa</taxon>
        <taxon>Chordata</taxon>
        <taxon>Craniata</taxon>
        <taxon>Vertebrata</taxon>
        <taxon>Euteleostomi</taxon>
        <taxon>Mammalia</taxon>
        <taxon>Eutheria</taxon>
        <taxon>Laurasiatheria</taxon>
        <taxon>Artiodactyla</taxon>
        <taxon>Ruminantia</taxon>
        <taxon>Pecora</taxon>
        <taxon>Bovidae</taxon>
        <taxon>Caprinae</taxon>
        <taxon>Ovis</taxon>
    </lineage>
</organism>
<protein>
    <recommendedName>
        <fullName>Gap junction beta-2 protein</fullName>
    </recommendedName>
    <alternativeName>
        <fullName>Connexin-26</fullName>
        <shortName>Cx26</shortName>
    </alternativeName>
</protein>
<sequence>MDWSALQTILGGVNKHSTSIGKIWLTVLFIFRIMILVVAAKEVWGDEQADFVCNTLQPGCKNVCYDHYFPISHIRLWALQLIFVSTPALLVAMHVAYYRHEKKRKFIRGEIKTEFKDIEEIKNQKVRIEGSLWWTYTGSIFFRVIFEAAFMYVFYVMYDGFAMQRLVKCNAWPCPNTVDCFVSRPTEKTVFTVFMIAVSGICILLNVTELCYLLIRFCSGKSKKPV</sequence>
<reference key="1">
    <citation type="submission" date="1994-11" db="EMBL/GenBank/DDBJ databases">
        <authorList>
            <person name="Dong Y."/>
            <person name="Green C."/>
            <person name="Donaldson P.J."/>
            <person name="Kistler J."/>
        </authorList>
    </citation>
    <scope>NUCLEOTIDE SEQUENCE [MRNA]</scope>
    <source>
        <tissue>Cornea</tissue>
    </source>
</reference>
<gene>
    <name type="primary">GJB2</name>
</gene>
<keyword id="KW-0106">Calcium</keyword>
<keyword id="KW-0965">Cell junction</keyword>
<keyword id="KW-1003">Cell membrane</keyword>
<keyword id="KW-1015">Disulfide bond</keyword>
<keyword id="KW-0303">Gap junction</keyword>
<keyword id="KW-1009">Hearing</keyword>
<keyword id="KW-0472">Membrane</keyword>
<keyword id="KW-0479">Metal-binding</keyword>
<keyword id="KW-1185">Reference proteome</keyword>
<keyword id="KW-0812">Transmembrane</keyword>
<keyword id="KW-1133">Transmembrane helix</keyword>
<feature type="chain" id="PRO_0000057861" description="Gap junction beta-2 protein">
    <location>
        <begin position="1"/>
        <end position="226"/>
    </location>
</feature>
<feature type="intramembrane region" evidence="1">
    <location>
        <begin position="2"/>
        <end position="13"/>
    </location>
</feature>
<feature type="topological domain" description="Cytoplasmic" evidence="3">
    <location>
        <begin position="14"/>
        <end position="20"/>
    </location>
</feature>
<feature type="transmembrane region" description="Helical" evidence="1">
    <location>
        <begin position="21"/>
        <end position="40"/>
    </location>
</feature>
<feature type="topological domain" description="Extracellular" evidence="3">
    <location>
        <begin position="41"/>
        <end position="73"/>
    </location>
</feature>
<feature type="transmembrane region" description="Helical" evidence="1">
    <location>
        <begin position="74"/>
        <end position="94"/>
    </location>
</feature>
<feature type="topological domain" description="Cytoplasmic" evidence="3">
    <location>
        <begin position="95"/>
        <end position="135"/>
    </location>
</feature>
<feature type="transmembrane region" description="Helical" evidence="1">
    <location>
        <begin position="136"/>
        <end position="156"/>
    </location>
</feature>
<feature type="topological domain" description="Extracellular" evidence="3">
    <location>
        <begin position="157"/>
        <end position="189"/>
    </location>
</feature>
<feature type="transmembrane region" description="Helical" evidence="1">
    <location>
        <begin position="190"/>
        <end position="210"/>
    </location>
</feature>
<feature type="topological domain" description="Cytoplasmic" evidence="3">
    <location>
        <begin position="211"/>
        <end position="226"/>
    </location>
</feature>
<feature type="binding site" description="in other chain" evidence="1">
    <location>
        <position position="42"/>
    </location>
    <ligand>
        <name>Ca(2+)</name>
        <dbReference type="ChEBI" id="CHEBI:29108"/>
        <note>ligand shared between two neighboring subunits</note>
    </ligand>
</feature>
<feature type="binding site" evidence="1">
    <location>
        <position position="45"/>
    </location>
    <ligand>
        <name>Ca(2+)</name>
        <dbReference type="ChEBI" id="CHEBI:29108"/>
        <note>ligand shared between two neighboring subunits</note>
    </ligand>
</feature>
<feature type="binding site" evidence="1">
    <location>
        <position position="47"/>
    </location>
    <ligand>
        <name>Ca(2+)</name>
        <dbReference type="ChEBI" id="CHEBI:29108"/>
        <note>ligand shared between two neighboring subunits</note>
    </ligand>
</feature>
<feature type="disulfide bond" evidence="1">
    <location>
        <begin position="53"/>
        <end position="180"/>
    </location>
</feature>
<feature type="disulfide bond" evidence="1">
    <location>
        <begin position="60"/>
        <end position="174"/>
    </location>
</feature>
<feature type="disulfide bond" evidence="1">
    <location>
        <begin position="64"/>
        <end position="169"/>
    </location>
</feature>
<dbReference type="EMBL" id="U17592">
    <property type="protein sequence ID" value="AAA67446.1"/>
    <property type="molecule type" value="mRNA"/>
</dbReference>
<dbReference type="RefSeq" id="NP_001009780.1">
    <property type="nucleotide sequence ID" value="NM_001009780.1"/>
</dbReference>
<dbReference type="SMR" id="P46691"/>
<dbReference type="STRING" id="9940.ENSOARP00000018338"/>
<dbReference type="PaxDb" id="9940-ENSOARP00000018338"/>
<dbReference type="Ensembl" id="ENSOART00040048169">
    <property type="protein sequence ID" value="ENSOARP00040024650"/>
    <property type="gene ID" value="ENSOARG00040029000"/>
</dbReference>
<dbReference type="Ensembl" id="ENSOART00040048178">
    <property type="protein sequence ID" value="ENSOARP00040024654"/>
    <property type="gene ID" value="ENSOARG00040029000"/>
</dbReference>
<dbReference type="Ensembl" id="ENSOART00040048188">
    <property type="protein sequence ID" value="ENSOARP00040024659"/>
    <property type="gene ID" value="ENSOARG00040029000"/>
</dbReference>
<dbReference type="Ensembl" id="ENSOART00225064974">
    <property type="protein sequence ID" value="ENSOARP00225032527"/>
    <property type="gene ID" value="ENSOARG00225039304"/>
</dbReference>
<dbReference type="Ensembl" id="ENSOART00225064978">
    <property type="protein sequence ID" value="ENSOARP00225032528"/>
    <property type="gene ID" value="ENSOARG00225039304"/>
</dbReference>
<dbReference type="Ensembl" id="ENSOART00225064981">
    <property type="protein sequence ID" value="ENSOARP00225032529"/>
    <property type="gene ID" value="ENSOARG00225039304"/>
</dbReference>
<dbReference type="GeneID" id="443345"/>
<dbReference type="KEGG" id="oas:443345"/>
<dbReference type="CTD" id="2706"/>
<dbReference type="eggNOG" id="ENOG502QWM8">
    <property type="taxonomic scope" value="Eukaryota"/>
</dbReference>
<dbReference type="HOGENOM" id="CLU_037388_4_1_1"/>
<dbReference type="OMA" id="RMVKCNA"/>
<dbReference type="OrthoDB" id="8934037at2759"/>
<dbReference type="Proteomes" id="UP000002356">
    <property type="component" value="Chromosome 10"/>
</dbReference>
<dbReference type="Bgee" id="ENSOARG00000017089">
    <property type="expression patterns" value="Expressed in rumen and 51 other cell types or tissues"/>
</dbReference>
<dbReference type="GO" id="GO:0005922">
    <property type="term" value="C:connexin complex"/>
    <property type="evidence" value="ECO:0000250"/>
    <property type="project" value="UniProtKB"/>
</dbReference>
<dbReference type="GO" id="GO:0005886">
    <property type="term" value="C:plasma membrane"/>
    <property type="evidence" value="ECO:0000250"/>
    <property type="project" value="UniProtKB"/>
</dbReference>
<dbReference type="GO" id="GO:0005509">
    <property type="term" value="F:calcium ion binding"/>
    <property type="evidence" value="ECO:0000250"/>
    <property type="project" value="UniProtKB"/>
</dbReference>
<dbReference type="GO" id="GO:0005243">
    <property type="term" value="F:gap junction channel activity"/>
    <property type="evidence" value="ECO:0000250"/>
    <property type="project" value="UniProtKB"/>
</dbReference>
<dbReference type="GO" id="GO:1903763">
    <property type="term" value="F:gap junction channel activity involved in cell communication by electrical coupling"/>
    <property type="evidence" value="ECO:0007669"/>
    <property type="project" value="Ensembl"/>
</dbReference>
<dbReference type="GO" id="GO:0042802">
    <property type="term" value="F:identical protein binding"/>
    <property type="evidence" value="ECO:0007669"/>
    <property type="project" value="Ensembl"/>
</dbReference>
<dbReference type="GO" id="GO:0007267">
    <property type="term" value="P:cell-cell signaling"/>
    <property type="evidence" value="ECO:0000250"/>
    <property type="project" value="UniProtKB"/>
</dbReference>
<dbReference type="GO" id="GO:0016264">
    <property type="term" value="P:gap junction assembly"/>
    <property type="evidence" value="ECO:0007669"/>
    <property type="project" value="Ensembl"/>
</dbReference>
<dbReference type="GO" id="GO:1990349">
    <property type="term" value="P:gap junction-mediated intercellular transport"/>
    <property type="evidence" value="ECO:0000250"/>
    <property type="project" value="UniProtKB"/>
</dbReference>
<dbReference type="GO" id="GO:0007605">
    <property type="term" value="P:sensory perception of sound"/>
    <property type="evidence" value="ECO:0007669"/>
    <property type="project" value="UniProtKB-KW"/>
</dbReference>
<dbReference type="FunFam" id="1.20.1440.80:FF:000001">
    <property type="entry name" value="Gap junction alpha-1"/>
    <property type="match status" value="1"/>
</dbReference>
<dbReference type="Gene3D" id="1.20.1440.80">
    <property type="entry name" value="Gap junction channel protein cysteine-rich domain"/>
    <property type="match status" value="1"/>
</dbReference>
<dbReference type="InterPro" id="IPR000500">
    <property type="entry name" value="Connexin"/>
</dbReference>
<dbReference type="InterPro" id="IPR002268">
    <property type="entry name" value="Connexin26"/>
</dbReference>
<dbReference type="InterPro" id="IPR019570">
    <property type="entry name" value="Connexin_CCC"/>
</dbReference>
<dbReference type="InterPro" id="IPR017990">
    <property type="entry name" value="Connexin_CS"/>
</dbReference>
<dbReference type="InterPro" id="IPR013092">
    <property type="entry name" value="Connexin_N"/>
</dbReference>
<dbReference type="InterPro" id="IPR038359">
    <property type="entry name" value="Connexin_N_sf"/>
</dbReference>
<dbReference type="PANTHER" id="PTHR11984">
    <property type="entry name" value="CONNEXIN"/>
    <property type="match status" value="1"/>
</dbReference>
<dbReference type="PANTHER" id="PTHR11984:SF46">
    <property type="entry name" value="GAP JUNCTION BETA-2 PROTEIN"/>
    <property type="match status" value="1"/>
</dbReference>
<dbReference type="Pfam" id="PF00029">
    <property type="entry name" value="Connexin"/>
    <property type="match status" value="1"/>
</dbReference>
<dbReference type="PRINTS" id="PR00206">
    <property type="entry name" value="CONNEXIN"/>
</dbReference>
<dbReference type="PRINTS" id="PR01139">
    <property type="entry name" value="CONNEXINB2"/>
</dbReference>
<dbReference type="SMART" id="SM00037">
    <property type="entry name" value="CNX"/>
    <property type="match status" value="1"/>
</dbReference>
<dbReference type="SMART" id="SM01089">
    <property type="entry name" value="Connexin_CCC"/>
    <property type="match status" value="1"/>
</dbReference>
<dbReference type="PROSITE" id="PS00407">
    <property type="entry name" value="CONNEXINS_1"/>
    <property type="match status" value="1"/>
</dbReference>
<dbReference type="PROSITE" id="PS00408">
    <property type="entry name" value="CONNEXINS_2"/>
    <property type="match status" value="1"/>
</dbReference>
<comment type="function">
    <text evidence="1 2">Structural component of gap junctions (By similarity). Gap junctions are dodecameric channels that connect the cytoplasm of adjoining cells. They are formed by the docking of two hexameric hemichannels, one from each cell membrane (By similarity). Small molecules and ions diffuse from one cell to a neighboring cell via the central pore (By similarity).</text>
</comment>
<comment type="subunit">
    <text evidence="1 2">A hemichannel or connexon is composed of a hexamer of connexins. A functional gap junction is formed by the apposition of two hemichannels (By similarity). Forms heteromeric channels with GJB4. Interacts with CNST (By similarity).</text>
</comment>
<comment type="subcellular location">
    <subcellularLocation>
        <location evidence="2">Cell membrane</location>
        <topology evidence="1">Multi-pass membrane protein</topology>
    </subcellularLocation>
    <subcellularLocation>
        <location evidence="2">Cell junction</location>
        <location evidence="2">Gap junction</location>
    </subcellularLocation>
    <text evidence="2">Colocalizes with GJB4 at gap junction plaques in the cochlea.</text>
</comment>
<comment type="similarity">
    <text evidence="3">Belongs to the connexin family. Beta-type (group I) subfamily.</text>
</comment>
<name>CXB2_SHEEP</name>